<keyword id="KW-0067">ATP-binding</keyword>
<keyword id="KW-0963">Cytoplasm</keyword>
<keyword id="KW-1015">Disulfide bond</keyword>
<keyword id="KW-0547">Nucleotide-binding</keyword>
<keyword id="KW-0694">RNA-binding</keyword>
<keyword id="KW-0808">Transferase</keyword>
<keyword id="KW-0819">tRNA processing</keyword>
<keyword id="KW-0820">tRNA-binding</keyword>
<sequence>MTQNTEPQSPAHTRVIVGMSGGVDSSVAAWLLKDQGYQVEGLFMKNWDEDDGTEYCTAMTDLADAQAVADAIGIKLHTASFAAEYWDRVFEHFLSEYSAGRTPNPDILCNKEVKFRAFLDYAVTLGADYIATGHYTRQRPLNDGSGKAQLLKGLDPNKDQSYFLHAVSGERIARTLFPVGELEKPEVRRIAEEQGFVTHDKKDSTGICFIGERKFTDFLKQYLPAQPGNIETPDGTVIGKHQGLMYHTIGQRQGLGIGGLAEFGDEPWYVAEKDLKRNVLIAVQGKHHPLLFSRGLVSGPVDWVAGEPPAQKFRCKAKTRYRQPDQDCEVTVIDGGVKVVFDDAQRAVTPGQSVVFYQGEVCLGGGVIEQTWRDNEALPARLEHQASEGSDT</sequence>
<protein>
    <recommendedName>
        <fullName evidence="1">tRNA-specific 2-thiouridylase MnmA</fullName>
        <ecNumber evidence="1">2.8.1.13</ecNumber>
    </recommendedName>
</protein>
<dbReference type="EC" id="2.8.1.13" evidence="1"/>
<dbReference type="EMBL" id="CP000514">
    <property type="protein sequence ID" value="ABM18844.1"/>
    <property type="molecule type" value="Genomic_DNA"/>
</dbReference>
<dbReference type="RefSeq" id="WP_011785242.1">
    <property type="nucleotide sequence ID" value="NC_008740.1"/>
</dbReference>
<dbReference type="SMR" id="A1U1H5"/>
<dbReference type="STRING" id="351348.Maqu_1762"/>
<dbReference type="KEGG" id="maq:Maqu_1762"/>
<dbReference type="eggNOG" id="COG0482">
    <property type="taxonomic scope" value="Bacteria"/>
</dbReference>
<dbReference type="HOGENOM" id="CLU_035188_1_0_6"/>
<dbReference type="OrthoDB" id="9800696at2"/>
<dbReference type="Proteomes" id="UP000000998">
    <property type="component" value="Chromosome"/>
</dbReference>
<dbReference type="GO" id="GO:0005737">
    <property type="term" value="C:cytoplasm"/>
    <property type="evidence" value="ECO:0007669"/>
    <property type="project" value="UniProtKB-SubCell"/>
</dbReference>
<dbReference type="GO" id="GO:0005524">
    <property type="term" value="F:ATP binding"/>
    <property type="evidence" value="ECO:0007669"/>
    <property type="project" value="UniProtKB-KW"/>
</dbReference>
<dbReference type="GO" id="GO:0000049">
    <property type="term" value="F:tRNA binding"/>
    <property type="evidence" value="ECO:0007669"/>
    <property type="project" value="UniProtKB-KW"/>
</dbReference>
<dbReference type="GO" id="GO:0103016">
    <property type="term" value="F:tRNA-uridine 2-sulfurtransferase activity"/>
    <property type="evidence" value="ECO:0007669"/>
    <property type="project" value="UniProtKB-EC"/>
</dbReference>
<dbReference type="GO" id="GO:0002143">
    <property type="term" value="P:tRNA wobble position uridine thiolation"/>
    <property type="evidence" value="ECO:0007669"/>
    <property type="project" value="TreeGrafter"/>
</dbReference>
<dbReference type="CDD" id="cd01998">
    <property type="entry name" value="MnmA_TRMU-like"/>
    <property type="match status" value="1"/>
</dbReference>
<dbReference type="FunFam" id="2.30.30.280:FF:000001">
    <property type="entry name" value="tRNA-specific 2-thiouridylase MnmA"/>
    <property type="match status" value="1"/>
</dbReference>
<dbReference type="FunFam" id="2.40.30.10:FF:000023">
    <property type="entry name" value="tRNA-specific 2-thiouridylase MnmA"/>
    <property type="match status" value="1"/>
</dbReference>
<dbReference type="FunFam" id="3.40.50.620:FF:000004">
    <property type="entry name" value="tRNA-specific 2-thiouridylase MnmA"/>
    <property type="match status" value="1"/>
</dbReference>
<dbReference type="Gene3D" id="2.30.30.280">
    <property type="entry name" value="Adenine nucleotide alpha hydrolases-like domains"/>
    <property type="match status" value="1"/>
</dbReference>
<dbReference type="Gene3D" id="3.40.50.620">
    <property type="entry name" value="HUPs"/>
    <property type="match status" value="1"/>
</dbReference>
<dbReference type="Gene3D" id="2.40.30.10">
    <property type="entry name" value="Translation factors"/>
    <property type="match status" value="1"/>
</dbReference>
<dbReference type="HAMAP" id="MF_00144">
    <property type="entry name" value="tRNA_thiouridyl_MnmA"/>
    <property type="match status" value="1"/>
</dbReference>
<dbReference type="InterPro" id="IPR004506">
    <property type="entry name" value="MnmA-like"/>
</dbReference>
<dbReference type="InterPro" id="IPR046885">
    <property type="entry name" value="MnmA-like_C"/>
</dbReference>
<dbReference type="InterPro" id="IPR046884">
    <property type="entry name" value="MnmA-like_central"/>
</dbReference>
<dbReference type="InterPro" id="IPR023382">
    <property type="entry name" value="MnmA-like_central_sf"/>
</dbReference>
<dbReference type="InterPro" id="IPR014729">
    <property type="entry name" value="Rossmann-like_a/b/a_fold"/>
</dbReference>
<dbReference type="NCBIfam" id="NF001138">
    <property type="entry name" value="PRK00143.1"/>
    <property type="match status" value="1"/>
</dbReference>
<dbReference type="NCBIfam" id="TIGR00420">
    <property type="entry name" value="trmU"/>
    <property type="match status" value="1"/>
</dbReference>
<dbReference type="PANTHER" id="PTHR11933:SF5">
    <property type="entry name" value="MITOCHONDRIAL TRNA-SPECIFIC 2-THIOURIDYLASE 1"/>
    <property type="match status" value="1"/>
</dbReference>
<dbReference type="PANTHER" id="PTHR11933">
    <property type="entry name" value="TRNA 5-METHYLAMINOMETHYL-2-THIOURIDYLATE -METHYLTRANSFERASE"/>
    <property type="match status" value="1"/>
</dbReference>
<dbReference type="Pfam" id="PF03054">
    <property type="entry name" value="tRNA_Me_trans"/>
    <property type="match status" value="1"/>
</dbReference>
<dbReference type="Pfam" id="PF20258">
    <property type="entry name" value="tRNA_Me_trans_C"/>
    <property type="match status" value="1"/>
</dbReference>
<dbReference type="Pfam" id="PF20259">
    <property type="entry name" value="tRNA_Me_trans_M"/>
    <property type="match status" value="1"/>
</dbReference>
<dbReference type="SUPFAM" id="SSF52402">
    <property type="entry name" value="Adenine nucleotide alpha hydrolases-like"/>
    <property type="match status" value="1"/>
</dbReference>
<accession>A1U1H5</accession>
<feature type="chain" id="PRO_0000349692" description="tRNA-specific 2-thiouridylase MnmA">
    <location>
        <begin position="1"/>
        <end position="392"/>
    </location>
</feature>
<feature type="region of interest" description="Interaction with target base in tRNA" evidence="1">
    <location>
        <begin position="104"/>
        <end position="106"/>
    </location>
</feature>
<feature type="region of interest" description="Interaction with tRNA" evidence="1">
    <location>
        <begin position="158"/>
        <end position="160"/>
    </location>
</feature>
<feature type="region of interest" description="Interaction with tRNA" evidence="1">
    <location>
        <begin position="320"/>
        <end position="321"/>
    </location>
</feature>
<feature type="active site" description="Nucleophile" evidence="1">
    <location>
        <position position="109"/>
    </location>
</feature>
<feature type="active site" description="Cysteine persulfide intermediate" evidence="1">
    <location>
        <position position="208"/>
    </location>
</feature>
<feature type="binding site" evidence="1">
    <location>
        <begin position="18"/>
        <end position="25"/>
    </location>
    <ligand>
        <name>ATP</name>
        <dbReference type="ChEBI" id="CHEBI:30616"/>
    </ligand>
</feature>
<feature type="binding site" evidence="1">
    <location>
        <position position="44"/>
    </location>
    <ligand>
        <name>ATP</name>
        <dbReference type="ChEBI" id="CHEBI:30616"/>
    </ligand>
</feature>
<feature type="binding site" evidence="1">
    <location>
        <position position="133"/>
    </location>
    <ligand>
        <name>ATP</name>
        <dbReference type="ChEBI" id="CHEBI:30616"/>
    </ligand>
</feature>
<feature type="site" description="Interaction with tRNA" evidence="1">
    <location>
        <position position="134"/>
    </location>
</feature>
<feature type="site" description="Interaction with tRNA" evidence="1">
    <location>
        <position position="352"/>
    </location>
</feature>
<feature type="disulfide bond" description="Alternate" evidence="1">
    <location>
        <begin position="109"/>
        <end position="208"/>
    </location>
</feature>
<proteinExistence type="inferred from homology"/>
<reference key="1">
    <citation type="journal article" date="2011" name="Appl. Environ. Microbiol.">
        <title>Genomic potential of Marinobacter aquaeolei, a biogeochemical 'opportunitroph'.</title>
        <authorList>
            <person name="Singer E."/>
            <person name="Webb E.A."/>
            <person name="Nelson W.C."/>
            <person name="Heidelberg J.F."/>
            <person name="Ivanova N."/>
            <person name="Pati A."/>
            <person name="Edwards K.J."/>
        </authorList>
    </citation>
    <scope>NUCLEOTIDE SEQUENCE [LARGE SCALE GENOMIC DNA]</scope>
    <source>
        <strain>ATCC 700491 / DSM 11845 / VT8</strain>
    </source>
</reference>
<organism>
    <name type="scientific">Marinobacter nauticus (strain ATCC 700491 / DSM 11845 / VT8)</name>
    <name type="common">Marinobacter aquaeolei</name>
    <dbReference type="NCBI Taxonomy" id="351348"/>
    <lineage>
        <taxon>Bacteria</taxon>
        <taxon>Pseudomonadati</taxon>
        <taxon>Pseudomonadota</taxon>
        <taxon>Gammaproteobacteria</taxon>
        <taxon>Pseudomonadales</taxon>
        <taxon>Marinobacteraceae</taxon>
        <taxon>Marinobacter</taxon>
    </lineage>
</organism>
<evidence type="ECO:0000255" key="1">
    <source>
        <dbReference type="HAMAP-Rule" id="MF_00144"/>
    </source>
</evidence>
<gene>
    <name evidence="1" type="primary">mnmA</name>
    <name type="ordered locus">Maqu_1762</name>
</gene>
<comment type="function">
    <text evidence="1">Catalyzes the 2-thiolation of uridine at the wobble position (U34) of tRNA, leading to the formation of s(2)U34.</text>
</comment>
<comment type="catalytic activity">
    <reaction evidence="1">
        <text>S-sulfanyl-L-cysteinyl-[protein] + uridine(34) in tRNA + AH2 + ATP = 2-thiouridine(34) in tRNA + L-cysteinyl-[protein] + A + AMP + diphosphate + H(+)</text>
        <dbReference type="Rhea" id="RHEA:47032"/>
        <dbReference type="Rhea" id="RHEA-COMP:10131"/>
        <dbReference type="Rhea" id="RHEA-COMP:11726"/>
        <dbReference type="Rhea" id="RHEA-COMP:11727"/>
        <dbReference type="Rhea" id="RHEA-COMP:11728"/>
        <dbReference type="ChEBI" id="CHEBI:13193"/>
        <dbReference type="ChEBI" id="CHEBI:15378"/>
        <dbReference type="ChEBI" id="CHEBI:17499"/>
        <dbReference type="ChEBI" id="CHEBI:29950"/>
        <dbReference type="ChEBI" id="CHEBI:30616"/>
        <dbReference type="ChEBI" id="CHEBI:33019"/>
        <dbReference type="ChEBI" id="CHEBI:61963"/>
        <dbReference type="ChEBI" id="CHEBI:65315"/>
        <dbReference type="ChEBI" id="CHEBI:87170"/>
        <dbReference type="ChEBI" id="CHEBI:456215"/>
        <dbReference type="EC" id="2.8.1.13"/>
    </reaction>
</comment>
<comment type="subcellular location">
    <subcellularLocation>
        <location evidence="1">Cytoplasm</location>
    </subcellularLocation>
</comment>
<comment type="similarity">
    <text evidence="1">Belongs to the MnmA/TRMU family.</text>
</comment>
<name>MNMA_MARN8</name>